<comment type="function">
    <text evidence="1">Murein-degrading enzyme that degrades murein glycan strands and insoluble, high-molecular weight murein sacculi, with the concomitant formation of a 1,6-anhydromuramoyl product. Lytic transglycosylases (LTs) play an integral role in the metabolism of the peptidoglycan (PG) sacculus. Their lytic action creates space within the PG sacculus to allow for its expansion as well as for the insertion of various structures such as secretion systems and flagella.</text>
</comment>
<comment type="catalytic activity">
    <reaction evidence="1">
        <text>Exolytic cleavage of the (1-&gt;4)-beta-glycosidic linkage between N-acetylmuramic acid (MurNAc) and N-acetylglucosamine (GlcNAc) residues in peptidoglycan, from either the reducing or the non-reducing ends of the peptidoglycan chains, with concomitant formation of a 1,6-anhydrobond in the MurNAc residue.</text>
        <dbReference type="EC" id="4.2.2.n1"/>
    </reaction>
</comment>
<comment type="subcellular location">
    <subcellularLocation>
        <location>Cell outer membrane</location>
        <topology>Peripheral membrane protein</topology>
    </subcellularLocation>
    <text evidence="1">Attached to the inner leaflet of the outer membrane.</text>
</comment>
<comment type="domain">
    <text evidence="1">The N-terminal domain does not have lytic activity and probably modulates enzymatic activity. The C-terminal domain is the catalytic active domain.</text>
</comment>
<comment type="similarity">
    <text evidence="1">In the N-terminal section; belongs to the bacterial solute-binding protein 3 family.</text>
</comment>
<comment type="similarity">
    <text evidence="1">In the C-terminal section; belongs to the transglycosylase Slt family.</text>
</comment>
<comment type="sequence caution" evidence="3">
    <conflict type="erroneous initiation">
        <sequence resource="EMBL-CDS" id="AAN66661"/>
    </conflict>
</comment>
<sequence>MFAHTALRQRCAKWLLATGLFLLLGACVEKPSTLERVKEDGVLRVITRNSPATYFQDRNGETGFEYELVQHFADDLGVKLQIETADNLDELYDALGKPSGPVLAAAGLVSSERRKTQVRYSHPYLEVTPQVIYRNGRPRPTGAKGLVGKKIMVLKGSSHADQLAELKKQYPALQYEESDAVEVVDLLRMVDEGQIDLTLVDSNELAMNQVYFPNVRVAFDLGETRDQRWAVAAGEDNSLLNEINEYLDKAQKNGTLQRLKDRYYGHVDVLGYVGAYTFAQHLQQRLPKYEKHFKSYAKVEQVDWRLLAAIGYQESMWQPEVTSKTGVRGLMMLTQRTAQAMGVSNRLDPRQSIQGGAKYFMKIKEELDDSIKEPDRTWFALAAYNVGGGHLEDARTLAKREKLNPNKWLDVKKMLPRLAQKQWYRQTKYGYARGGEPVHFVANIRRYYDILTWVTQPQLEGQVAEGNLHVPGVNKDKPADKSSPM</sequence>
<accession>Q88P17</accession>
<proteinExistence type="inferred from homology"/>
<keyword id="KW-0998">Cell outer membrane</keyword>
<keyword id="KW-0961">Cell wall biogenesis/degradation</keyword>
<keyword id="KW-0456">Lyase</keyword>
<keyword id="KW-0472">Membrane</keyword>
<keyword id="KW-1185">Reference proteome</keyword>
<keyword id="KW-0732">Signal</keyword>
<protein>
    <recommendedName>
        <fullName evidence="1">Membrane-bound lytic murein transglycosylase F</fullName>
        <ecNumber evidence="1">4.2.2.n1</ecNumber>
    </recommendedName>
    <alternativeName>
        <fullName evidence="1">Murein lyase F</fullName>
    </alternativeName>
</protein>
<dbReference type="EC" id="4.2.2.n1" evidence="1"/>
<dbReference type="EMBL" id="AE015451">
    <property type="protein sequence ID" value="AAN66661.1"/>
    <property type="status" value="ALT_INIT"/>
    <property type="molecule type" value="Genomic_DNA"/>
</dbReference>
<dbReference type="RefSeq" id="NP_743197.2">
    <property type="nucleotide sequence ID" value="NC_002947.4"/>
</dbReference>
<dbReference type="RefSeq" id="WP_020193355.1">
    <property type="nucleotide sequence ID" value="NZ_CP169744.1"/>
</dbReference>
<dbReference type="SMR" id="Q88P17"/>
<dbReference type="STRING" id="160488.PP_1036"/>
<dbReference type="PaxDb" id="160488-PP_1036"/>
<dbReference type="GeneID" id="83678388"/>
<dbReference type="KEGG" id="ppu:PP_1036"/>
<dbReference type="PATRIC" id="fig|160488.4.peg.1099"/>
<dbReference type="eggNOG" id="COG4623">
    <property type="taxonomic scope" value="Bacteria"/>
</dbReference>
<dbReference type="HOGENOM" id="CLU_027494_0_1_6"/>
<dbReference type="OrthoDB" id="9815002at2"/>
<dbReference type="BioCyc" id="PPUT160488:G1G01-1109-MONOMER"/>
<dbReference type="Proteomes" id="UP000000556">
    <property type="component" value="Chromosome"/>
</dbReference>
<dbReference type="GO" id="GO:0009279">
    <property type="term" value="C:cell outer membrane"/>
    <property type="evidence" value="ECO:0007669"/>
    <property type="project" value="UniProtKB-SubCell"/>
</dbReference>
<dbReference type="GO" id="GO:0008933">
    <property type="term" value="F:peptidoglycan lytic transglycosylase activity"/>
    <property type="evidence" value="ECO:0007669"/>
    <property type="project" value="UniProtKB-UniRule"/>
</dbReference>
<dbReference type="GO" id="GO:0016998">
    <property type="term" value="P:cell wall macromolecule catabolic process"/>
    <property type="evidence" value="ECO:0007669"/>
    <property type="project" value="UniProtKB-UniRule"/>
</dbReference>
<dbReference type="GO" id="GO:0071555">
    <property type="term" value="P:cell wall organization"/>
    <property type="evidence" value="ECO:0007669"/>
    <property type="project" value="UniProtKB-KW"/>
</dbReference>
<dbReference type="GO" id="GO:0009253">
    <property type="term" value="P:peptidoglycan catabolic process"/>
    <property type="evidence" value="ECO:0007669"/>
    <property type="project" value="TreeGrafter"/>
</dbReference>
<dbReference type="CDD" id="cd13403">
    <property type="entry name" value="MLTF-like"/>
    <property type="match status" value="1"/>
</dbReference>
<dbReference type="CDD" id="cd01009">
    <property type="entry name" value="PBP2_YfhD_N"/>
    <property type="match status" value="1"/>
</dbReference>
<dbReference type="Gene3D" id="1.10.530.10">
    <property type="match status" value="1"/>
</dbReference>
<dbReference type="Gene3D" id="3.40.190.10">
    <property type="entry name" value="Periplasmic binding protein-like II"/>
    <property type="match status" value="2"/>
</dbReference>
<dbReference type="HAMAP" id="MF_02016">
    <property type="entry name" value="MltF"/>
    <property type="match status" value="1"/>
</dbReference>
<dbReference type="InterPro" id="IPR023346">
    <property type="entry name" value="Lysozyme-like_dom_sf"/>
</dbReference>
<dbReference type="InterPro" id="IPR023703">
    <property type="entry name" value="MltF"/>
</dbReference>
<dbReference type="InterPro" id="IPR001638">
    <property type="entry name" value="Solute-binding_3/MltF_N"/>
</dbReference>
<dbReference type="InterPro" id="IPR000189">
    <property type="entry name" value="Transglyc_AS"/>
</dbReference>
<dbReference type="InterPro" id="IPR008258">
    <property type="entry name" value="Transglycosylase_SLT_dom_1"/>
</dbReference>
<dbReference type="NCBIfam" id="NF008112">
    <property type="entry name" value="PRK10859.1"/>
    <property type="match status" value="1"/>
</dbReference>
<dbReference type="PANTHER" id="PTHR35936">
    <property type="entry name" value="MEMBRANE-BOUND LYTIC MUREIN TRANSGLYCOSYLASE F"/>
    <property type="match status" value="1"/>
</dbReference>
<dbReference type="PANTHER" id="PTHR35936:SF32">
    <property type="entry name" value="MEMBRANE-BOUND LYTIC MUREIN TRANSGLYCOSYLASE F"/>
    <property type="match status" value="1"/>
</dbReference>
<dbReference type="Pfam" id="PF00497">
    <property type="entry name" value="SBP_bac_3"/>
    <property type="match status" value="1"/>
</dbReference>
<dbReference type="Pfam" id="PF01464">
    <property type="entry name" value="SLT"/>
    <property type="match status" value="1"/>
</dbReference>
<dbReference type="SMART" id="SM00062">
    <property type="entry name" value="PBPb"/>
    <property type="match status" value="1"/>
</dbReference>
<dbReference type="SUPFAM" id="SSF53955">
    <property type="entry name" value="Lysozyme-like"/>
    <property type="match status" value="1"/>
</dbReference>
<dbReference type="SUPFAM" id="SSF53850">
    <property type="entry name" value="Periplasmic binding protein-like II"/>
    <property type="match status" value="1"/>
</dbReference>
<dbReference type="PROSITE" id="PS00922">
    <property type="entry name" value="TRANSGLYCOSYLASE"/>
    <property type="match status" value="1"/>
</dbReference>
<name>MLTF_PSEPK</name>
<evidence type="ECO:0000255" key="1">
    <source>
        <dbReference type="HAMAP-Rule" id="MF_02016"/>
    </source>
</evidence>
<evidence type="ECO:0000256" key="2">
    <source>
        <dbReference type="SAM" id="MobiDB-lite"/>
    </source>
</evidence>
<evidence type="ECO:0000305" key="3"/>
<organism>
    <name type="scientific">Pseudomonas putida (strain ATCC 47054 / DSM 6125 / CFBP 8728 / NCIMB 11950 / KT2440)</name>
    <dbReference type="NCBI Taxonomy" id="160488"/>
    <lineage>
        <taxon>Bacteria</taxon>
        <taxon>Pseudomonadati</taxon>
        <taxon>Pseudomonadota</taxon>
        <taxon>Gammaproteobacteria</taxon>
        <taxon>Pseudomonadales</taxon>
        <taxon>Pseudomonadaceae</taxon>
        <taxon>Pseudomonas</taxon>
    </lineage>
</organism>
<reference key="1">
    <citation type="journal article" date="2002" name="Environ. Microbiol.">
        <title>Complete genome sequence and comparative analysis of the metabolically versatile Pseudomonas putida KT2440.</title>
        <authorList>
            <person name="Nelson K.E."/>
            <person name="Weinel C."/>
            <person name="Paulsen I.T."/>
            <person name="Dodson R.J."/>
            <person name="Hilbert H."/>
            <person name="Martins dos Santos V.A.P."/>
            <person name="Fouts D.E."/>
            <person name="Gill S.R."/>
            <person name="Pop M."/>
            <person name="Holmes M."/>
            <person name="Brinkac L.M."/>
            <person name="Beanan M.J."/>
            <person name="DeBoy R.T."/>
            <person name="Daugherty S.C."/>
            <person name="Kolonay J.F."/>
            <person name="Madupu R."/>
            <person name="Nelson W.C."/>
            <person name="White O."/>
            <person name="Peterson J.D."/>
            <person name="Khouri H.M."/>
            <person name="Hance I."/>
            <person name="Chris Lee P."/>
            <person name="Holtzapple E.K."/>
            <person name="Scanlan D."/>
            <person name="Tran K."/>
            <person name="Moazzez A."/>
            <person name="Utterback T.R."/>
            <person name="Rizzo M."/>
            <person name="Lee K."/>
            <person name="Kosack D."/>
            <person name="Moestl D."/>
            <person name="Wedler H."/>
            <person name="Lauber J."/>
            <person name="Stjepandic D."/>
            <person name="Hoheisel J."/>
            <person name="Straetz M."/>
            <person name="Heim S."/>
            <person name="Kiewitz C."/>
            <person name="Eisen J.A."/>
            <person name="Timmis K.N."/>
            <person name="Duesterhoeft A."/>
            <person name="Tuemmler B."/>
            <person name="Fraser C.M."/>
        </authorList>
    </citation>
    <scope>NUCLEOTIDE SEQUENCE [LARGE SCALE GENOMIC DNA]</scope>
    <source>
        <strain>ATCC 47054 / DSM 6125 / CFBP 8728 / NCIMB 11950 / KT2440</strain>
    </source>
</reference>
<gene>
    <name evidence="1" type="primary">mltF</name>
    <name type="ordered locus">PP_1036</name>
</gene>
<feature type="signal peptide" evidence="1">
    <location>
        <begin position="1"/>
        <end position="29"/>
    </location>
</feature>
<feature type="chain" id="PRO_0000353964" description="Membrane-bound lytic murein transglycosylase F">
    <location>
        <begin position="30"/>
        <end position="485"/>
    </location>
</feature>
<feature type="region of interest" description="Non-LT domain" evidence="1">
    <location>
        <begin position="30"/>
        <end position="267"/>
    </location>
</feature>
<feature type="region of interest" description="LT domain" evidence="1">
    <location>
        <begin position="268"/>
        <end position="485"/>
    </location>
</feature>
<feature type="region of interest" description="Disordered" evidence="2">
    <location>
        <begin position="465"/>
        <end position="485"/>
    </location>
</feature>
<feature type="compositionally biased region" description="Basic and acidic residues" evidence="2">
    <location>
        <begin position="474"/>
        <end position="485"/>
    </location>
</feature>
<feature type="active site" evidence="1">
    <location>
        <position position="314"/>
    </location>
</feature>